<dbReference type="EMBL" id="BC126097">
    <property type="protein sequence ID" value="AAI26098.1"/>
    <property type="molecule type" value="mRNA"/>
</dbReference>
<dbReference type="RefSeq" id="NP_001070896.1">
    <property type="nucleotide sequence ID" value="NM_001077428.1"/>
</dbReference>
<dbReference type="RefSeq" id="XP_006231906.1">
    <property type="nucleotide sequence ID" value="XM_006231844.5"/>
</dbReference>
<dbReference type="RefSeq" id="XP_006231907.1">
    <property type="nucleotide sequence ID" value="XM_006231845.5"/>
</dbReference>
<dbReference type="SMR" id="A0JN27"/>
<dbReference type="FunCoup" id="A0JN27">
    <property type="interactions" value="739"/>
</dbReference>
<dbReference type="STRING" id="10116.ENSRNOP00000057895"/>
<dbReference type="iPTMnet" id="A0JN27"/>
<dbReference type="PhosphoSitePlus" id="A0JN27"/>
<dbReference type="PaxDb" id="10116-ENSRNOP00000057895"/>
<dbReference type="PeptideAtlas" id="A0JN27"/>
<dbReference type="Ensembl" id="ENSRNOT00000061183.4">
    <property type="protein sequence ID" value="ENSRNOP00000057895.2"/>
    <property type="gene ID" value="ENSRNOG00000018230.8"/>
</dbReference>
<dbReference type="GeneID" id="294693"/>
<dbReference type="KEGG" id="rno:294693"/>
<dbReference type="UCSC" id="RGD:1310499">
    <property type="organism name" value="rat"/>
</dbReference>
<dbReference type="AGR" id="RGD:1310499"/>
<dbReference type="CTD" id="2966"/>
<dbReference type="RGD" id="1310499">
    <property type="gene designation" value="Gtf2h2"/>
</dbReference>
<dbReference type="eggNOG" id="KOG2807">
    <property type="taxonomic scope" value="Eukaryota"/>
</dbReference>
<dbReference type="GeneTree" id="ENSGT00490000043395"/>
<dbReference type="HOGENOM" id="CLU_028556_1_0_1"/>
<dbReference type="InParanoid" id="A0JN27"/>
<dbReference type="OrthoDB" id="284275at2759"/>
<dbReference type="PhylomeDB" id="A0JN27"/>
<dbReference type="TreeFam" id="TF314037"/>
<dbReference type="Reactome" id="R-RNO-112382">
    <property type="pathway name" value="Formation of RNA Pol II elongation complex"/>
</dbReference>
<dbReference type="Reactome" id="R-RNO-113418">
    <property type="pathway name" value="Formation of the Early Elongation Complex"/>
</dbReference>
<dbReference type="Reactome" id="R-RNO-5696395">
    <property type="pathway name" value="Formation of Incision Complex in GG-NER"/>
</dbReference>
<dbReference type="Reactome" id="R-RNO-5696400">
    <property type="pathway name" value="Dual Incision in GG-NER"/>
</dbReference>
<dbReference type="Reactome" id="R-RNO-674695">
    <property type="pathway name" value="RNA Polymerase II Pre-transcription Events"/>
</dbReference>
<dbReference type="Reactome" id="R-RNO-6781823">
    <property type="pathway name" value="Formation of TC-NER Pre-Incision Complex"/>
</dbReference>
<dbReference type="Reactome" id="R-RNO-6782135">
    <property type="pathway name" value="Dual incision in TC-NER"/>
</dbReference>
<dbReference type="Reactome" id="R-RNO-6782210">
    <property type="pathway name" value="Gap-filling DNA repair synthesis and ligation in TC-NER"/>
</dbReference>
<dbReference type="Reactome" id="R-RNO-6796648">
    <property type="pathway name" value="TP53 Regulates Transcription of DNA Repair Genes"/>
</dbReference>
<dbReference type="Reactome" id="R-RNO-72086">
    <property type="pathway name" value="mRNA Capping"/>
</dbReference>
<dbReference type="Reactome" id="R-RNO-73762">
    <property type="pathway name" value="RNA Polymerase I Transcription Initiation"/>
</dbReference>
<dbReference type="Reactome" id="R-RNO-73772">
    <property type="pathway name" value="RNA Polymerase I Promoter Escape"/>
</dbReference>
<dbReference type="Reactome" id="R-RNO-73776">
    <property type="pathway name" value="RNA Polymerase II Promoter Escape"/>
</dbReference>
<dbReference type="Reactome" id="R-RNO-73779">
    <property type="pathway name" value="RNA Polymerase II Transcription Pre-Initiation And Promoter Opening"/>
</dbReference>
<dbReference type="Reactome" id="R-RNO-73863">
    <property type="pathway name" value="RNA Polymerase I Transcription Termination"/>
</dbReference>
<dbReference type="Reactome" id="R-RNO-75953">
    <property type="pathway name" value="RNA Polymerase II Transcription Initiation"/>
</dbReference>
<dbReference type="Reactome" id="R-RNO-75955">
    <property type="pathway name" value="RNA Polymerase II Transcription Elongation"/>
</dbReference>
<dbReference type="Reactome" id="R-RNO-76042">
    <property type="pathway name" value="RNA Polymerase II Transcription Initiation And Promoter Clearance"/>
</dbReference>
<dbReference type="Reactome" id="R-RNO-77075">
    <property type="pathway name" value="RNA Pol II CTD phosphorylation and interaction with CE"/>
</dbReference>
<dbReference type="PRO" id="PR:A0JN27"/>
<dbReference type="Proteomes" id="UP000002494">
    <property type="component" value="Chromosome 2"/>
</dbReference>
<dbReference type="Bgee" id="ENSRNOG00000018230">
    <property type="expression patterns" value="Expressed in ovary and 19 other cell types or tissues"/>
</dbReference>
<dbReference type="GO" id="GO:0000438">
    <property type="term" value="C:core TFIIH complex portion of holo TFIIH complex"/>
    <property type="evidence" value="ECO:0000250"/>
    <property type="project" value="UniProtKB"/>
</dbReference>
<dbReference type="GO" id="GO:0005634">
    <property type="term" value="C:nucleus"/>
    <property type="evidence" value="ECO:0000250"/>
    <property type="project" value="UniProtKB"/>
</dbReference>
<dbReference type="GO" id="GO:0005669">
    <property type="term" value="C:transcription factor TFIID complex"/>
    <property type="evidence" value="ECO:0000266"/>
    <property type="project" value="RGD"/>
</dbReference>
<dbReference type="GO" id="GO:0000439">
    <property type="term" value="C:transcription factor TFIIH core complex"/>
    <property type="evidence" value="ECO:0000266"/>
    <property type="project" value="RGD"/>
</dbReference>
<dbReference type="GO" id="GO:0005675">
    <property type="term" value="C:transcription factor TFIIH holo complex"/>
    <property type="evidence" value="ECO:0000250"/>
    <property type="project" value="UniProtKB"/>
</dbReference>
<dbReference type="GO" id="GO:0016251">
    <property type="term" value="F:RNA polymerase II general transcription initiation factor activity"/>
    <property type="evidence" value="ECO:0000266"/>
    <property type="project" value="RGD"/>
</dbReference>
<dbReference type="GO" id="GO:0008270">
    <property type="term" value="F:zinc ion binding"/>
    <property type="evidence" value="ECO:0007669"/>
    <property type="project" value="UniProtKB-KW"/>
</dbReference>
<dbReference type="GO" id="GO:0002031">
    <property type="term" value="P:G protein-coupled receptor internalization"/>
    <property type="evidence" value="ECO:0000266"/>
    <property type="project" value="RGD"/>
</dbReference>
<dbReference type="GO" id="GO:0006289">
    <property type="term" value="P:nucleotide-excision repair"/>
    <property type="evidence" value="ECO:0000318"/>
    <property type="project" value="GO_Central"/>
</dbReference>
<dbReference type="GO" id="GO:0006357">
    <property type="term" value="P:regulation of transcription by RNA polymerase II"/>
    <property type="evidence" value="ECO:0000318"/>
    <property type="project" value="GO_Central"/>
</dbReference>
<dbReference type="GO" id="GO:0006366">
    <property type="term" value="P:transcription by RNA polymerase II"/>
    <property type="evidence" value="ECO:0000250"/>
    <property type="project" value="UniProtKB"/>
</dbReference>
<dbReference type="GO" id="GO:0006367">
    <property type="term" value="P:transcription initiation at RNA polymerase II promoter"/>
    <property type="evidence" value="ECO:0000266"/>
    <property type="project" value="RGD"/>
</dbReference>
<dbReference type="CDD" id="cd01453">
    <property type="entry name" value="vWA_transcription_factor_IIH_type"/>
    <property type="match status" value="1"/>
</dbReference>
<dbReference type="FunFam" id="3.30.40.10:FF:000282">
    <property type="entry name" value="General transcription factor IIH subunit"/>
    <property type="match status" value="1"/>
</dbReference>
<dbReference type="FunFam" id="3.40.50.410:FF:000015">
    <property type="entry name" value="General transcription factor IIH subunit 2"/>
    <property type="match status" value="1"/>
</dbReference>
<dbReference type="Gene3D" id="3.40.50.410">
    <property type="entry name" value="von Willebrand factor, type A domain"/>
    <property type="match status" value="1"/>
</dbReference>
<dbReference type="Gene3D" id="3.30.40.10">
    <property type="entry name" value="Zinc/RING finger domain, C3HC4 (zinc finger)"/>
    <property type="match status" value="1"/>
</dbReference>
<dbReference type="InterPro" id="IPR046349">
    <property type="entry name" value="C1-like_sf"/>
</dbReference>
<dbReference type="InterPro" id="IPR007198">
    <property type="entry name" value="Ssl1-like"/>
</dbReference>
<dbReference type="InterPro" id="IPR004595">
    <property type="entry name" value="TFIIH_C1-like_dom"/>
</dbReference>
<dbReference type="InterPro" id="IPR012170">
    <property type="entry name" value="TFIIH_SSL1/p44"/>
</dbReference>
<dbReference type="InterPro" id="IPR002035">
    <property type="entry name" value="VWF_A"/>
</dbReference>
<dbReference type="InterPro" id="IPR036465">
    <property type="entry name" value="vWFA_dom_sf"/>
</dbReference>
<dbReference type="InterPro" id="IPR013087">
    <property type="entry name" value="Znf_C2H2_type"/>
</dbReference>
<dbReference type="InterPro" id="IPR013083">
    <property type="entry name" value="Znf_RING/FYVE/PHD"/>
</dbReference>
<dbReference type="NCBIfam" id="TIGR00622">
    <property type="entry name" value="ssl1"/>
    <property type="match status" value="1"/>
</dbReference>
<dbReference type="PANTHER" id="PTHR12695">
    <property type="entry name" value="GENERAL TRANSCRIPTION FACTOR IIH SUBUNIT 2"/>
    <property type="match status" value="1"/>
</dbReference>
<dbReference type="PANTHER" id="PTHR12695:SF2">
    <property type="entry name" value="GENERAL TRANSCRIPTION FACTOR IIH SUBUNIT 2-RELATED"/>
    <property type="match status" value="1"/>
</dbReference>
<dbReference type="Pfam" id="PF07975">
    <property type="entry name" value="C1_4"/>
    <property type="match status" value="1"/>
</dbReference>
<dbReference type="Pfam" id="PF04056">
    <property type="entry name" value="Ssl1"/>
    <property type="match status" value="1"/>
</dbReference>
<dbReference type="PIRSF" id="PIRSF015919">
    <property type="entry name" value="TFIIH_SSL1"/>
    <property type="match status" value="1"/>
</dbReference>
<dbReference type="SMART" id="SM01047">
    <property type="entry name" value="C1_4"/>
    <property type="match status" value="1"/>
</dbReference>
<dbReference type="SMART" id="SM00327">
    <property type="entry name" value="VWA"/>
    <property type="match status" value="1"/>
</dbReference>
<dbReference type="SUPFAM" id="SSF57889">
    <property type="entry name" value="Cysteine-rich domain"/>
    <property type="match status" value="1"/>
</dbReference>
<dbReference type="SUPFAM" id="SSF53300">
    <property type="entry name" value="vWA-like"/>
    <property type="match status" value="1"/>
</dbReference>
<dbReference type="PROSITE" id="PS50234">
    <property type="entry name" value="VWFA"/>
    <property type="match status" value="1"/>
</dbReference>
<keyword id="KW-0227">DNA damage</keyword>
<keyword id="KW-0234">DNA repair</keyword>
<keyword id="KW-0479">Metal-binding</keyword>
<keyword id="KW-0539">Nucleus</keyword>
<keyword id="KW-0597">Phosphoprotein</keyword>
<keyword id="KW-1185">Reference proteome</keyword>
<keyword id="KW-0804">Transcription</keyword>
<keyword id="KW-0805">Transcription regulation</keyword>
<keyword id="KW-0862">Zinc</keyword>
<keyword id="KW-0863">Zinc-finger</keyword>
<name>TF2H2_RAT</name>
<sequence length="396" mass="44703">MDEEPERTKRWEGGYERTWEILKEDESGSLKATIEDILFKAKRKRVFEHHGQVRLGMMRHLYVVVDGSRTMEDQDLKPNRLTCTLKLLEYFVEEYFDQNPISQIGIIVTKSKRAEKLTELSGNPRKHITSLKKAVDMTCHGEPSLYNSLSMAMQTLKHMPGHTSREVLIIFSSLTTCDPSNIYDLIKTLKTAKIRVSVIGLSAEVRVCTVLARETGGTYHVILDETHYKELLARHVSPPPASSGSECSLIRMGFPQHTIASLSDQDAKPSFSMAHLDNNSTEPGLTLGGYFCPQCRAKYCELPVECKICGLTLVSAPHLARSYHHLFPLDAFQEIPLEEYKGERFCYGCQGELKDQHVYVCTVCRNVFCVDCDVFVHDSLHCCPGCVHKIPTQSGV</sequence>
<protein>
    <recommendedName>
        <fullName>General transcription factor IIH subunit 2</fullName>
    </recommendedName>
    <alternativeName>
        <fullName>Basic transcription factor 2 44 kDa subunit</fullName>
        <shortName>BTF2 p44</shortName>
    </alternativeName>
    <alternativeName>
        <fullName>General transcription factor IIH polypeptide 2</fullName>
    </alternativeName>
    <alternativeName>
        <fullName>TFIIH basal transcription factor complex p44 subunit</fullName>
    </alternativeName>
</protein>
<evidence type="ECO:0000250" key="1">
    <source>
        <dbReference type="UniProtKB" id="Q13888"/>
    </source>
</evidence>
<evidence type="ECO:0000255" key="2">
    <source>
        <dbReference type="PROSITE-ProRule" id="PRU00219"/>
    </source>
</evidence>
<evidence type="ECO:0000305" key="3"/>
<evidence type="ECO:0007744" key="4">
    <source>
    </source>
</evidence>
<proteinExistence type="evidence at protein level"/>
<feature type="chain" id="PRO_0000327566" description="General transcription factor IIH subunit 2">
    <location>
        <begin position="1"/>
        <end position="396"/>
    </location>
</feature>
<feature type="domain" description="VWFA" evidence="2">
    <location>
        <begin position="60"/>
        <end position="236"/>
    </location>
</feature>
<feature type="zinc finger region" description="C4-type">
    <location>
        <begin position="292"/>
        <end position="309"/>
    </location>
</feature>
<feature type="modified residue" description="Phosphotyrosine" evidence="4">
    <location>
        <position position="95"/>
    </location>
</feature>
<gene>
    <name type="primary">Gtf2h2</name>
</gene>
<accession>A0JN27</accession>
<comment type="function">
    <text evidence="1">Component of the general transcription and DNA repair factor IIH (TFIIH) core complex, which is involved in general and transcription-coupled nucleotide excision repair (NER) of damaged DNA and, when complexed to CAK, in RNA transcription by RNA polymerase II. In NER, TFIIH acts by opening DNA around the lesion to allow the excision of the damaged oligonucleotide and its replacement by a new DNA fragment. In transcription, TFIIH has an essential role in transcription initiation. When the pre-initiation complex (PIC) has been established, TFIIH is required for promoter opening and promoter escape. Phosphorylation of the C-terminal tail (CTD) of the largest subunit of RNA polymerase II by the kinase module CAK controls the initiation of transcription. The N-terminus of GTF2H2 interacts with and regulates XPD whereas an intact C-terminus is required for a successful escape of RNAP II form the promoter.</text>
</comment>
<comment type="subunit">
    <text evidence="1">Component of the TFIID-containing RNA polymerase II pre-initiation complex that is composed of TBP and at least GTF2A1, GTF2A2, GTF2E1, GTF2E2, GTF2F1, GTF2H2, GTF2H3, GTF2H4, GTF2H5, GTF2B, TCEA1, ERCC2 and ERCC3. Component of the 7-subunit TFIIH core complex composed of XPB/ERCC3, XPD/ERCC2, GTF2H1, GTF2H2, GTF2H3, GTF2H4 and GTF2H5, which is active in NER. The core complex associates with the 3-subunit CDK-activating kinase (CAK) module composed of CCNH/cyclin H, CDK7 and MNAT1 to form the 10-subunit holoenzyme (holo-TFIIH) active in transcription. Interacts with XPB, XPD, GTF2H1 and GTF2H3.</text>
</comment>
<comment type="subcellular location">
    <subcellularLocation>
        <location evidence="1">Nucleus</location>
    </subcellularLocation>
</comment>
<comment type="similarity">
    <text evidence="3">Belongs to the GTF2H2 family.</text>
</comment>
<reference key="1">
    <citation type="journal article" date="2004" name="Genome Res.">
        <title>The status, quality, and expansion of the NIH full-length cDNA project: the Mammalian Gene Collection (MGC).</title>
        <authorList>
            <consortium name="The MGC Project Team"/>
        </authorList>
    </citation>
    <scope>NUCLEOTIDE SEQUENCE [LARGE SCALE MRNA]</scope>
    <source>
        <tissue>Testis</tissue>
    </source>
</reference>
<reference key="2">
    <citation type="journal article" date="2006" name="Proc. Natl. Acad. Sci. U.S.A.">
        <title>Quantitative phosphoproteomics of vasopressin-sensitive renal cells: regulation of aquaporin-2 phosphorylation at two sites.</title>
        <authorList>
            <person name="Hoffert J.D."/>
            <person name="Pisitkun T."/>
            <person name="Wang G."/>
            <person name="Shen R.-F."/>
            <person name="Knepper M.A."/>
        </authorList>
    </citation>
    <scope>PHOSPHORYLATION [LARGE SCALE ANALYSIS] AT TYR-95</scope>
    <scope>IDENTIFICATION BY MASS SPECTROMETRY [LARGE SCALE ANALYSIS]</scope>
</reference>
<organism>
    <name type="scientific">Rattus norvegicus</name>
    <name type="common">Rat</name>
    <dbReference type="NCBI Taxonomy" id="10116"/>
    <lineage>
        <taxon>Eukaryota</taxon>
        <taxon>Metazoa</taxon>
        <taxon>Chordata</taxon>
        <taxon>Craniata</taxon>
        <taxon>Vertebrata</taxon>
        <taxon>Euteleostomi</taxon>
        <taxon>Mammalia</taxon>
        <taxon>Eutheria</taxon>
        <taxon>Euarchontoglires</taxon>
        <taxon>Glires</taxon>
        <taxon>Rodentia</taxon>
        <taxon>Myomorpha</taxon>
        <taxon>Muroidea</taxon>
        <taxon>Muridae</taxon>
        <taxon>Murinae</taxon>
        <taxon>Rattus</taxon>
    </lineage>
</organism>